<dbReference type="EC" id="2.5.1.39" evidence="1"/>
<dbReference type="EMBL" id="CP000269">
    <property type="protein sequence ID" value="ABR88736.1"/>
    <property type="molecule type" value="Genomic_DNA"/>
</dbReference>
<dbReference type="RefSeq" id="WP_012078212.1">
    <property type="nucleotide sequence ID" value="NC_009659.1"/>
</dbReference>
<dbReference type="SMR" id="A6SUU0"/>
<dbReference type="STRING" id="375286.mma_0347"/>
<dbReference type="KEGG" id="mms:mma_0347"/>
<dbReference type="eggNOG" id="COG0382">
    <property type="taxonomic scope" value="Bacteria"/>
</dbReference>
<dbReference type="HOGENOM" id="CLU_034879_1_0_4"/>
<dbReference type="OrthoDB" id="9782418at2"/>
<dbReference type="UniPathway" id="UPA00232"/>
<dbReference type="Proteomes" id="UP000006388">
    <property type="component" value="Chromosome"/>
</dbReference>
<dbReference type="GO" id="GO:0005886">
    <property type="term" value="C:plasma membrane"/>
    <property type="evidence" value="ECO:0007669"/>
    <property type="project" value="UniProtKB-SubCell"/>
</dbReference>
<dbReference type="GO" id="GO:0008412">
    <property type="term" value="F:4-hydroxybenzoate polyprenyltransferase activity"/>
    <property type="evidence" value="ECO:0007669"/>
    <property type="project" value="UniProtKB-UniRule"/>
</dbReference>
<dbReference type="GO" id="GO:0006744">
    <property type="term" value="P:ubiquinone biosynthetic process"/>
    <property type="evidence" value="ECO:0007669"/>
    <property type="project" value="UniProtKB-UniRule"/>
</dbReference>
<dbReference type="CDD" id="cd13959">
    <property type="entry name" value="PT_UbiA_COQ2"/>
    <property type="match status" value="1"/>
</dbReference>
<dbReference type="FunFam" id="1.10.357.140:FF:000002">
    <property type="entry name" value="4-hydroxybenzoate octaprenyltransferase"/>
    <property type="match status" value="1"/>
</dbReference>
<dbReference type="FunFam" id="1.20.120.1780:FF:000001">
    <property type="entry name" value="4-hydroxybenzoate octaprenyltransferase"/>
    <property type="match status" value="1"/>
</dbReference>
<dbReference type="Gene3D" id="1.10.357.140">
    <property type="entry name" value="UbiA prenyltransferase"/>
    <property type="match status" value="1"/>
</dbReference>
<dbReference type="Gene3D" id="1.20.120.1780">
    <property type="entry name" value="UbiA prenyltransferase"/>
    <property type="match status" value="1"/>
</dbReference>
<dbReference type="HAMAP" id="MF_01635">
    <property type="entry name" value="UbiA"/>
    <property type="match status" value="1"/>
</dbReference>
<dbReference type="InterPro" id="IPR006370">
    <property type="entry name" value="HB_polyprenyltransferase-like"/>
</dbReference>
<dbReference type="InterPro" id="IPR039653">
    <property type="entry name" value="Prenyltransferase"/>
</dbReference>
<dbReference type="InterPro" id="IPR000537">
    <property type="entry name" value="UbiA_prenyltransferase"/>
</dbReference>
<dbReference type="InterPro" id="IPR030470">
    <property type="entry name" value="UbiA_prenylTrfase_CS"/>
</dbReference>
<dbReference type="InterPro" id="IPR044878">
    <property type="entry name" value="UbiA_sf"/>
</dbReference>
<dbReference type="NCBIfam" id="TIGR01474">
    <property type="entry name" value="ubiA_proteo"/>
    <property type="match status" value="1"/>
</dbReference>
<dbReference type="PANTHER" id="PTHR11048:SF28">
    <property type="entry name" value="4-HYDROXYBENZOATE POLYPRENYLTRANSFERASE, MITOCHONDRIAL"/>
    <property type="match status" value="1"/>
</dbReference>
<dbReference type="PANTHER" id="PTHR11048">
    <property type="entry name" value="PRENYLTRANSFERASES"/>
    <property type="match status" value="1"/>
</dbReference>
<dbReference type="Pfam" id="PF01040">
    <property type="entry name" value="UbiA"/>
    <property type="match status" value="1"/>
</dbReference>
<dbReference type="PROSITE" id="PS00943">
    <property type="entry name" value="UBIA"/>
    <property type="match status" value="1"/>
</dbReference>
<gene>
    <name evidence="1" type="primary">ubiA</name>
    <name type="ordered locus">mma_0347</name>
</gene>
<protein>
    <recommendedName>
        <fullName evidence="1">4-hydroxybenzoate octaprenyltransferase</fullName>
        <ecNumber evidence="1">2.5.1.39</ecNumber>
    </recommendedName>
    <alternativeName>
        <fullName evidence="1">4-HB polyprenyltransferase</fullName>
    </alternativeName>
</protein>
<feature type="chain" id="PRO_0000336977" description="4-hydroxybenzoate octaprenyltransferase">
    <location>
        <begin position="1"/>
        <end position="284"/>
    </location>
</feature>
<feature type="transmembrane region" description="Helical" evidence="1">
    <location>
        <begin position="16"/>
        <end position="36"/>
    </location>
</feature>
<feature type="transmembrane region" description="Helical" evidence="1">
    <location>
        <begin position="40"/>
        <end position="60"/>
    </location>
</feature>
<feature type="transmembrane region" description="Helical" evidence="1">
    <location>
        <begin position="91"/>
        <end position="111"/>
    </location>
</feature>
<feature type="transmembrane region" description="Helical" evidence="1">
    <location>
        <begin position="132"/>
        <end position="152"/>
    </location>
</feature>
<feature type="transmembrane region" description="Helical" evidence="1">
    <location>
        <begin position="157"/>
        <end position="177"/>
    </location>
</feature>
<feature type="transmembrane region" description="Helical" evidence="1">
    <location>
        <begin position="207"/>
        <end position="227"/>
    </location>
</feature>
<feature type="transmembrane region" description="Helical" evidence="1">
    <location>
        <begin position="231"/>
        <end position="251"/>
    </location>
</feature>
<feature type="transmembrane region" description="Helical" evidence="1">
    <location>
        <begin position="259"/>
        <end position="279"/>
    </location>
</feature>
<name>UBIA_JANMA</name>
<organism>
    <name type="scientific">Janthinobacterium sp. (strain Marseille)</name>
    <name type="common">Minibacterium massiliensis</name>
    <dbReference type="NCBI Taxonomy" id="375286"/>
    <lineage>
        <taxon>Bacteria</taxon>
        <taxon>Pseudomonadati</taxon>
        <taxon>Pseudomonadota</taxon>
        <taxon>Betaproteobacteria</taxon>
        <taxon>Burkholderiales</taxon>
        <taxon>Oxalobacteraceae</taxon>
        <taxon>Janthinobacterium</taxon>
    </lineage>
</organism>
<accession>A6SUU0</accession>
<comment type="function">
    <text evidence="1">Catalyzes the prenylation of para-hydroxybenzoate (PHB) with an all-trans polyprenyl group. Mediates the second step in the final reaction sequence of ubiquinone-8 (UQ-8) biosynthesis, which is the condensation of the polyisoprenoid side chain with PHB, generating the first membrane-bound Q intermediate 3-octaprenyl-4-hydroxybenzoate.</text>
</comment>
<comment type="catalytic activity">
    <reaction evidence="1">
        <text>all-trans-octaprenyl diphosphate + 4-hydroxybenzoate = 4-hydroxy-3-(all-trans-octaprenyl)benzoate + diphosphate</text>
        <dbReference type="Rhea" id="RHEA:27782"/>
        <dbReference type="ChEBI" id="CHEBI:1617"/>
        <dbReference type="ChEBI" id="CHEBI:17879"/>
        <dbReference type="ChEBI" id="CHEBI:33019"/>
        <dbReference type="ChEBI" id="CHEBI:57711"/>
        <dbReference type="EC" id="2.5.1.39"/>
    </reaction>
</comment>
<comment type="cofactor">
    <cofactor evidence="1">
        <name>Mg(2+)</name>
        <dbReference type="ChEBI" id="CHEBI:18420"/>
    </cofactor>
</comment>
<comment type="pathway">
    <text evidence="1">Cofactor biosynthesis; ubiquinone biosynthesis.</text>
</comment>
<comment type="subcellular location">
    <subcellularLocation>
        <location evidence="1">Cell inner membrane</location>
        <topology evidence="1">Multi-pass membrane protein</topology>
    </subcellularLocation>
</comment>
<comment type="similarity">
    <text evidence="1">Belongs to the UbiA prenyltransferase family.</text>
</comment>
<proteinExistence type="inferred from homology"/>
<sequence length="284" mass="31809">MNRLQLYFRLIRLHKPIGILLLLWPTLWALWMASDGKPDWTLVAIFTLGTVLMRSAGCAVNDYADRDFDKHVQRTVDRPITSGKIKPYEALLVALVLTLLAFALIWPLNTLTKQLSIAAVIIAATYPYFKRFFAIPQAYLGIAFGFGIPMGFAAVQNTVPAAAWWLLVANVFWSVAYDTEYAMVDREDDLKLGMKTSAITFGRYDVAIIMFCYAMTLGIIGIVGWQFGLRIWFVAGLLLAAVCAAYHYTLIRSRERAGCFAAFNHNNWLGGAIFGGVALDYLLR</sequence>
<keyword id="KW-0997">Cell inner membrane</keyword>
<keyword id="KW-1003">Cell membrane</keyword>
<keyword id="KW-0460">Magnesium</keyword>
<keyword id="KW-0472">Membrane</keyword>
<keyword id="KW-0808">Transferase</keyword>
<keyword id="KW-0812">Transmembrane</keyword>
<keyword id="KW-1133">Transmembrane helix</keyword>
<keyword id="KW-0831">Ubiquinone biosynthesis</keyword>
<evidence type="ECO:0000255" key="1">
    <source>
        <dbReference type="HAMAP-Rule" id="MF_01635"/>
    </source>
</evidence>
<reference key="1">
    <citation type="journal article" date="2007" name="PLoS Genet.">
        <title>Genome analysis of Minibacterium massiliensis highlights the convergent evolution of water-living bacteria.</title>
        <authorList>
            <person name="Audic S."/>
            <person name="Robert C."/>
            <person name="Campagna B."/>
            <person name="Parinello H."/>
            <person name="Claverie J.-M."/>
            <person name="Raoult D."/>
            <person name="Drancourt M."/>
        </authorList>
    </citation>
    <scope>NUCLEOTIDE SEQUENCE [LARGE SCALE GENOMIC DNA]</scope>
    <source>
        <strain>Marseille</strain>
    </source>
</reference>